<reference key="1">
    <citation type="journal article" date="2008" name="J. Bacteriol.">
        <title>Genome sequence of the fish pathogen Renibacterium salmoninarum suggests reductive evolution away from an environmental Arthrobacter ancestor.</title>
        <authorList>
            <person name="Wiens G.D."/>
            <person name="Rockey D.D."/>
            <person name="Wu Z."/>
            <person name="Chang J."/>
            <person name="Levy R."/>
            <person name="Crane S."/>
            <person name="Chen D.S."/>
            <person name="Capri G.R."/>
            <person name="Burnett J.R."/>
            <person name="Sudheesh P.S."/>
            <person name="Schipma M.J."/>
            <person name="Burd H."/>
            <person name="Bhattacharyya A."/>
            <person name="Rhodes L.D."/>
            <person name="Kaul R."/>
            <person name="Strom M.S."/>
        </authorList>
    </citation>
    <scope>NUCLEOTIDE SEQUENCE [LARGE SCALE GENOMIC DNA]</scope>
    <source>
        <strain>ATCC 33209 / DSM 20767 / JCM 11484 / NBRC 15589 / NCIMB 2235</strain>
    </source>
</reference>
<organism>
    <name type="scientific">Renibacterium salmoninarum (strain ATCC 33209 / DSM 20767 / JCM 11484 / NBRC 15589 / NCIMB 2235)</name>
    <dbReference type="NCBI Taxonomy" id="288705"/>
    <lineage>
        <taxon>Bacteria</taxon>
        <taxon>Bacillati</taxon>
        <taxon>Actinomycetota</taxon>
        <taxon>Actinomycetes</taxon>
        <taxon>Micrococcales</taxon>
        <taxon>Micrococcaceae</taxon>
        <taxon>Renibacterium</taxon>
    </lineage>
</organism>
<dbReference type="EMBL" id="CP000910">
    <property type="protein sequence ID" value="ABY23735.1"/>
    <property type="molecule type" value="Genomic_DNA"/>
</dbReference>
<dbReference type="RefSeq" id="WP_012245405.1">
    <property type="nucleotide sequence ID" value="NC_010168.1"/>
</dbReference>
<dbReference type="SMR" id="A9WSE7"/>
<dbReference type="STRING" id="288705.RSal33209_2002"/>
<dbReference type="KEGG" id="rsa:RSal33209_2002"/>
<dbReference type="eggNOG" id="COG0217">
    <property type="taxonomic scope" value="Bacteria"/>
</dbReference>
<dbReference type="HOGENOM" id="CLU_062974_2_2_11"/>
<dbReference type="Proteomes" id="UP000002007">
    <property type="component" value="Chromosome"/>
</dbReference>
<dbReference type="GO" id="GO:0005829">
    <property type="term" value="C:cytosol"/>
    <property type="evidence" value="ECO:0007669"/>
    <property type="project" value="TreeGrafter"/>
</dbReference>
<dbReference type="GO" id="GO:0003677">
    <property type="term" value="F:DNA binding"/>
    <property type="evidence" value="ECO:0007669"/>
    <property type="project" value="UniProtKB-UniRule"/>
</dbReference>
<dbReference type="GO" id="GO:0006355">
    <property type="term" value="P:regulation of DNA-templated transcription"/>
    <property type="evidence" value="ECO:0007669"/>
    <property type="project" value="UniProtKB-UniRule"/>
</dbReference>
<dbReference type="FunFam" id="1.10.10.200:FF:000002">
    <property type="entry name" value="Probable transcriptional regulatory protein CLM62_37755"/>
    <property type="match status" value="1"/>
</dbReference>
<dbReference type="Gene3D" id="1.10.10.200">
    <property type="match status" value="1"/>
</dbReference>
<dbReference type="Gene3D" id="3.30.70.980">
    <property type="match status" value="2"/>
</dbReference>
<dbReference type="HAMAP" id="MF_00693">
    <property type="entry name" value="Transcrip_reg_TACO1"/>
    <property type="match status" value="1"/>
</dbReference>
<dbReference type="InterPro" id="IPR017856">
    <property type="entry name" value="Integrase-like_N"/>
</dbReference>
<dbReference type="InterPro" id="IPR048300">
    <property type="entry name" value="TACO1_YebC-like_2nd/3rd_dom"/>
</dbReference>
<dbReference type="InterPro" id="IPR049083">
    <property type="entry name" value="TACO1_YebC_N"/>
</dbReference>
<dbReference type="InterPro" id="IPR002876">
    <property type="entry name" value="Transcrip_reg_TACO1-like"/>
</dbReference>
<dbReference type="InterPro" id="IPR026564">
    <property type="entry name" value="Transcrip_reg_TACO1-like_dom3"/>
</dbReference>
<dbReference type="InterPro" id="IPR029072">
    <property type="entry name" value="YebC-like"/>
</dbReference>
<dbReference type="NCBIfam" id="NF001030">
    <property type="entry name" value="PRK00110.1"/>
    <property type="match status" value="1"/>
</dbReference>
<dbReference type="NCBIfam" id="NF009044">
    <property type="entry name" value="PRK12378.1"/>
    <property type="match status" value="1"/>
</dbReference>
<dbReference type="NCBIfam" id="TIGR01033">
    <property type="entry name" value="YebC/PmpR family DNA-binding transcriptional regulator"/>
    <property type="match status" value="1"/>
</dbReference>
<dbReference type="PANTHER" id="PTHR12532:SF6">
    <property type="entry name" value="TRANSCRIPTIONAL REGULATORY PROTEIN YEBC-RELATED"/>
    <property type="match status" value="1"/>
</dbReference>
<dbReference type="PANTHER" id="PTHR12532">
    <property type="entry name" value="TRANSLATIONAL ACTIVATOR OF CYTOCHROME C OXIDASE 1"/>
    <property type="match status" value="1"/>
</dbReference>
<dbReference type="Pfam" id="PF20772">
    <property type="entry name" value="TACO1_YebC_N"/>
    <property type="match status" value="1"/>
</dbReference>
<dbReference type="Pfam" id="PF01709">
    <property type="entry name" value="Transcrip_reg"/>
    <property type="match status" value="1"/>
</dbReference>
<dbReference type="SUPFAM" id="SSF75625">
    <property type="entry name" value="YebC-like"/>
    <property type="match status" value="1"/>
</dbReference>
<sequence length="251" mass="27128">MSGHSKWATTKHKKAVIDGRRAKSFAKLIKNIEVAARVGGPDMAGNPALELAVTKAKKTSVPNDNIDRAIKRGSGQLGEAIDYQTIMYEGYGPQGTAILIECLTDNKNRAASEVRLAVSRNGGNMADPGSVSYLFARKGIVSLPQNELSEDDLLMAVLDAGAEEVKSEGENFEVISEPQDLPAIRSALTEAGIEYDTDDAGFVPSMQVELDVENAKKFMRLYDALEDLDDVQNVYSNADVSAEVMAQLDED</sequence>
<gene>
    <name type="ordered locus">RSal33209_2002</name>
</gene>
<protein>
    <recommendedName>
        <fullName evidence="1">Probable transcriptional regulatory protein RSal33209_2002</fullName>
    </recommendedName>
</protein>
<evidence type="ECO:0000255" key="1">
    <source>
        <dbReference type="HAMAP-Rule" id="MF_00693"/>
    </source>
</evidence>
<comment type="subcellular location">
    <subcellularLocation>
        <location evidence="1">Cytoplasm</location>
    </subcellularLocation>
</comment>
<comment type="similarity">
    <text evidence="1">Belongs to the TACO1 family.</text>
</comment>
<accession>A9WSE7</accession>
<name>Y2002_RENSM</name>
<proteinExistence type="inferred from homology"/>
<feature type="chain" id="PRO_1000083166" description="Probable transcriptional regulatory protein RSal33209_2002">
    <location>
        <begin position="1"/>
        <end position="251"/>
    </location>
</feature>
<keyword id="KW-0963">Cytoplasm</keyword>
<keyword id="KW-0238">DNA-binding</keyword>
<keyword id="KW-1185">Reference proteome</keyword>
<keyword id="KW-0804">Transcription</keyword>
<keyword id="KW-0805">Transcription regulation</keyword>